<keyword id="KW-0119">Carbohydrate metabolism</keyword>
<keyword id="KW-0413">Isomerase</keyword>
<proteinExistence type="evidence at protein level"/>
<accession>P0DTQ1</accession>
<reference key="1">
    <citation type="journal article" date="2013" name="Genome Announc.">
        <title>Complete genome sequence of Bacillus thuringiensis subsp. kurstaki strain HD73.</title>
        <authorList>
            <person name="Liu G."/>
            <person name="Song L."/>
            <person name="Shu C."/>
            <person name="Wang P."/>
            <person name="Deng C."/>
            <person name="Peng Q."/>
            <person name="Lereclus D."/>
            <person name="Wang X."/>
            <person name="Huang D."/>
            <person name="Zhang J."/>
            <person name="Song F."/>
        </authorList>
    </citation>
    <scope>NUCLEOTIDE SEQUENCE [LARGE SCALE GENOMIC DNA]</scope>
    <source>
        <strain>ATCC 35866 / NRRL B-4488 / HD73</strain>
    </source>
</reference>
<reference key="2">
    <citation type="journal article" date="2018" name="Nat. Commun.">
        <title>Salvage of the 5-deoxyribose byproduct of radical SAM enzymes.</title>
        <authorList>
            <person name="Beaudoin G.A.W."/>
            <person name="Li Q."/>
            <person name="Folz J."/>
            <person name="Fiehn O."/>
            <person name="Goodsell J.L."/>
            <person name="Angerhofer A."/>
            <person name="Bruner S.D."/>
            <person name="Hanson A.D."/>
        </authorList>
    </citation>
    <scope>FUNCTION</scope>
    <scope>CATALYTIC ACTIVITY</scope>
    <scope>BIOPHYSICOCHEMICAL PROPERTIES</scope>
    <scope>SUBUNIT</scope>
    <scope>PATHWAY</scope>
    <scope>DISRUPTION PHENOTYPE</scope>
    <source>
        <strain>HD73-20 / BGSC 4D22</strain>
    </source>
</reference>
<organism>
    <name type="scientific">Bacillus thuringiensis serovar kurstaki (strain ATCC 35866 / NRRL B-4488 / HD73)</name>
    <dbReference type="NCBI Taxonomy" id="1279365"/>
    <lineage>
        <taxon>Bacteria</taxon>
        <taxon>Bacillati</taxon>
        <taxon>Bacillota</taxon>
        <taxon>Bacilli</taxon>
        <taxon>Bacillales</taxon>
        <taxon>Bacillaceae</taxon>
        <taxon>Bacillus</taxon>
        <taxon>Bacillus cereus group</taxon>
    </lineage>
</organism>
<comment type="function">
    <text evidence="2">Catalyzes the isomerization of 5-deoxy-alpha-D-ribose 1-phosphate to 5-deoxy-D-ribulose 1-phosphate, as part of a 5-deoxyribose salvage pathway that recycles this toxic radical SAM enzyme by-product to mainstream metabolites. Also seems to be able to catalyze the conversion of methylthioribose-1-phosphate (MTR-1-P) into methylthioribulose-1-phosphate (MTRu-1-P). However this enzyme may not function in methionine salvage in B.thuringiensis since it exists a paralog (MtnA) present in the methionine salvage pathway cluster.</text>
</comment>
<comment type="catalytic activity">
    <reaction evidence="1 2">
        <text>5-deoxy-alpha-D-ribose 1-phosphate = 5-deoxy-D-ribulose 1-phosphate</text>
        <dbReference type="Rhea" id="RHEA:61296"/>
        <dbReference type="ChEBI" id="CHEBI:58749"/>
        <dbReference type="ChEBI" id="CHEBI:144504"/>
    </reaction>
    <physiologicalReaction direction="left-to-right" evidence="1 2">
        <dbReference type="Rhea" id="RHEA:61297"/>
    </physiologicalReaction>
</comment>
<comment type="catalytic activity">
    <reaction evidence="4">
        <text>5-(methylsulfanyl)-alpha-D-ribose 1-phosphate = 5-(methylsulfanyl)-D-ribulose 1-phosphate</text>
        <dbReference type="Rhea" id="RHEA:19989"/>
        <dbReference type="ChEBI" id="CHEBI:58533"/>
        <dbReference type="ChEBI" id="CHEBI:58548"/>
        <dbReference type="EC" id="5.3.1.23"/>
    </reaction>
</comment>
<comment type="biophysicochemical properties">
    <kinetics>
        <KM evidence="2">22 mM for 5-deoxy-alpha-D-ribose 1-phosphate</KM>
        <text evidence="2">kcat is 3.5 sec(-1) with 5-deoxy-alpha-D-ribose 1-phosphate as substrate.</text>
    </kinetics>
</comment>
<comment type="pathway">
    <text evidence="1 4">Carbohydrate degradation.</text>
</comment>
<comment type="subunit">
    <text evidence="2">Homodimer.</text>
</comment>
<comment type="disruption phenotype">
    <text evidence="2">Cells lacking this gene show no impaired growth on minimal medium but addition of 5-deoxyribose inhibits growth at a higher level than wild-type. Moreover, the intracellular level of 5-deoxy-D-ribulose 1-phosphate increases in wild-type cells supplied with 5-deoxyribose, but not in the deletion mutant cells.</text>
</comment>
<comment type="similarity">
    <text evidence="1">Belongs to the EIF-2B alpha/beta/delta subunits family. DrdI subfamily.</text>
</comment>
<sequence>MMEEQLIPIQWKDDALVLLDQTLLPNEIVYESFKTAESVWDAIQVMKVRGAPVIGVSAAYGVYLGVKEFAESTEEGFMDEVRKVCTYLATSRPTAVNLFWALERMESVAADNIHLSISQLKDRLLEEAKEIHREDEEINRQIGEHALTLFHDGMGVLTHCNAGALATTKYGTATAPMYLAKEKGWDLKIFSDETRPRLQGSTLTALELQRAGIDVTVITDNMAAMVMSQGKIDAVIVGCDRVAANGDIANKIGTLGVSILAKYYNIPFYVAAPTPTIDLKTPTGKEIPIEERDASEVINRFGQYSAPKESKVYNPAFDVTPHENVTAIITEKGIVKAPFTENLKKIFQ</sequence>
<protein>
    <recommendedName>
        <fullName evidence="1 4">5-deoxyribose 1-phosphate isomerase</fullName>
        <ecNumber evidence="1 2">5.3.1.-</ecNumber>
    </recommendedName>
    <alternativeName>
        <fullName evidence="3">5-deoxyribose disposal isomerase</fullName>
    </alternativeName>
    <alternativeName>
        <fullName evidence="4">Methylthioribose-1-phosphate isomerase</fullName>
        <shortName>M1Pi</shortName>
        <shortName>MTR-1-P isomerase</shortName>
        <ecNumber evidence="4">5.3.1.23</ecNumber>
    </alternativeName>
    <alternativeName>
        <fullName evidence="4">S-methyl-5-thioribose-1-phosphate isomerase</fullName>
    </alternativeName>
</protein>
<feature type="chain" id="PRO_0000448254" description="5-deoxyribose 1-phosphate isomerase">
    <location>
        <begin position="1"/>
        <end position="348"/>
    </location>
</feature>
<feature type="active site" description="Proton donor" evidence="1">
    <location>
        <position position="240"/>
    </location>
</feature>
<feature type="binding site" evidence="1">
    <location>
        <begin position="49"/>
        <end position="51"/>
    </location>
    <ligand>
        <name>substrate</name>
    </ligand>
</feature>
<feature type="binding site" evidence="1">
    <location>
        <position position="92"/>
    </location>
    <ligand>
        <name>substrate</name>
    </ligand>
</feature>
<feature type="binding site" evidence="1">
    <location>
        <position position="199"/>
    </location>
    <ligand>
        <name>substrate</name>
    </ligand>
</feature>
<feature type="binding site" evidence="1">
    <location>
        <begin position="250"/>
        <end position="251"/>
    </location>
    <ligand>
        <name>substrate</name>
    </ligand>
</feature>
<feature type="site" description="Transition state stabilizer" evidence="1">
    <location>
        <position position="160"/>
    </location>
</feature>
<evidence type="ECO:0000255" key="1">
    <source>
        <dbReference type="HAMAP-Rule" id="MF_02229"/>
    </source>
</evidence>
<evidence type="ECO:0000269" key="2">
    <source>
    </source>
</evidence>
<evidence type="ECO:0000303" key="3">
    <source>
    </source>
</evidence>
<evidence type="ECO:0000305" key="4">
    <source>
    </source>
</evidence>
<evidence type="ECO:0000312" key="5">
    <source>
        <dbReference type="EMBL" id="AGE76041.1"/>
    </source>
</evidence>
<dbReference type="EC" id="5.3.1.-" evidence="1 2"/>
<dbReference type="EC" id="5.3.1.23" evidence="4"/>
<dbReference type="EMBL" id="CP004069">
    <property type="protein sequence ID" value="AGE76041.1"/>
    <property type="molecule type" value="Genomic_DNA"/>
</dbReference>
<dbReference type="SMR" id="P0DTQ1"/>
<dbReference type="KEGG" id="btt:HD73_0461"/>
<dbReference type="BioCyc" id="MetaCyc:MONOMER-21302"/>
<dbReference type="GO" id="GO:0016861">
    <property type="term" value="F:intramolecular oxidoreductase activity, interconverting aldoses and ketoses"/>
    <property type="evidence" value="ECO:0000314"/>
    <property type="project" value="UniProtKB"/>
</dbReference>
<dbReference type="GO" id="GO:0046523">
    <property type="term" value="F:S-methyl-5-thioribose-1-phosphate isomerase activity"/>
    <property type="evidence" value="ECO:0007669"/>
    <property type="project" value="UniProtKB-EC"/>
</dbReference>
<dbReference type="GO" id="GO:0005975">
    <property type="term" value="P:carbohydrate metabolic process"/>
    <property type="evidence" value="ECO:0000314"/>
    <property type="project" value="UniProtKB"/>
</dbReference>
<dbReference type="GO" id="GO:0019509">
    <property type="term" value="P:L-methionine salvage from methylthioadenosine"/>
    <property type="evidence" value="ECO:0007669"/>
    <property type="project" value="TreeGrafter"/>
</dbReference>
<dbReference type="GO" id="GO:0019323">
    <property type="term" value="P:pentose catabolic process"/>
    <property type="evidence" value="ECO:0007669"/>
    <property type="project" value="UniProtKB-UniRule"/>
</dbReference>
<dbReference type="GO" id="GO:0110052">
    <property type="term" value="P:toxic metabolite repair"/>
    <property type="evidence" value="ECO:0000315"/>
    <property type="project" value="UniProtKB"/>
</dbReference>
<dbReference type="FunFam" id="1.20.120.420:FF:000001">
    <property type="entry name" value="Methylthioribose-1-phosphate isomerase"/>
    <property type="match status" value="1"/>
</dbReference>
<dbReference type="FunFam" id="3.40.50.10470:FF:000006">
    <property type="entry name" value="Methylthioribose-1-phosphate isomerase"/>
    <property type="match status" value="1"/>
</dbReference>
<dbReference type="Gene3D" id="1.20.120.420">
    <property type="entry name" value="translation initiation factor eif-2b, domain 1"/>
    <property type="match status" value="1"/>
</dbReference>
<dbReference type="Gene3D" id="3.40.50.10470">
    <property type="entry name" value="Translation initiation factor eif-2b, domain 2"/>
    <property type="match status" value="1"/>
</dbReference>
<dbReference type="HAMAP" id="MF_02229">
    <property type="entry name" value="Deoxyribose1P_isomerase"/>
    <property type="match status" value="1"/>
</dbReference>
<dbReference type="HAMAP" id="MF_01678">
    <property type="entry name" value="Salvage_MtnA"/>
    <property type="match status" value="1"/>
</dbReference>
<dbReference type="InterPro" id="IPR043679">
    <property type="entry name" value="Deoxyribose1P_isomerase_DrdI"/>
</dbReference>
<dbReference type="InterPro" id="IPR000649">
    <property type="entry name" value="IF-2B-related"/>
</dbReference>
<dbReference type="InterPro" id="IPR005251">
    <property type="entry name" value="IF-M1Pi"/>
</dbReference>
<dbReference type="InterPro" id="IPR042529">
    <property type="entry name" value="IF_2B-like_C"/>
</dbReference>
<dbReference type="InterPro" id="IPR011559">
    <property type="entry name" value="Initiation_fac_2B_a/b/d"/>
</dbReference>
<dbReference type="InterPro" id="IPR027363">
    <property type="entry name" value="M1Pi_N"/>
</dbReference>
<dbReference type="InterPro" id="IPR037171">
    <property type="entry name" value="NagB/RpiA_transferase-like"/>
</dbReference>
<dbReference type="NCBIfam" id="TIGR00524">
    <property type="entry name" value="eIF-2B_rel"/>
    <property type="match status" value="1"/>
</dbReference>
<dbReference type="NCBIfam" id="NF004326">
    <property type="entry name" value="PRK05720.1"/>
    <property type="match status" value="1"/>
</dbReference>
<dbReference type="NCBIfam" id="TIGR00512">
    <property type="entry name" value="salvage_mtnA"/>
    <property type="match status" value="1"/>
</dbReference>
<dbReference type="PANTHER" id="PTHR43475">
    <property type="entry name" value="METHYLTHIORIBOSE-1-PHOSPHATE ISOMERASE"/>
    <property type="match status" value="1"/>
</dbReference>
<dbReference type="PANTHER" id="PTHR43475:SF1">
    <property type="entry name" value="METHYLTHIORIBOSE-1-PHOSPHATE ISOMERASE"/>
    <property type="match status" value="1"/>
</dbReference>
<dbReference type="Pfam" id="PF01008">
    <property type="entry name" value="IF-2B"/>
    <property type="match status" value="1"/>
</dbReference>
<dbReference type="SUPFAM" id="SSF100950">
    <property type="entry name" value="NagB/RpiA/CoA transferase-like"/>
    <property type="match status" value="1"/>
</dbReference>
<gene>
    <name evidence="1 3" type="primary">drdI</name>
    <name evidence="5" type="ORF">HD73_0461</name>
</gene>
<name>DRDI_BACT7</name>